<keyword id="KW-0012">Acyltransferase</keyword>
<keyword id="KW-0963">Cytoplasm</keyword>
<keyword id="KW-1185">Reference proteome</keyword>
<keyword id="KW-0808">Transferase</keyword>
<sequence length="203" mass="23438">MYKKNIKIRNLGLRRIQDVCSSMNDFTITRKISTPDEIWLVQHYPVFTIGVSGTKHDVLVSNNIPIIFSNRGGKITYHAPGQLIIYVLINLFRRKLTVRRLILLMQNIIISTLKSFSIDSYILNNFPGVYVNNKKICSLGLRIRNGCSFHGMALNINMDLLPFEYINPCGNSFKMTQVIDIKPNLCFKIIKLMLMHKIREIFS</sequence>
<gene>
    <name evidence="1" type="primary">lipB</name>
    <name type="ordered locus">bbp_249</name>
</gene>
<comment type="function">
    <text evidence="1">Catalyzes the transfer of endogenously produced octanoic acid from octanoyl-acyl-carrier-protein onto the lipoyl domains of lipoate-dependent enzymes. Lipoyl-ACP can also act as a substrate although octanoyl-ACP is likely to be the physiological substrate.</text>
</comment>
<comment type="catalytic activity">
    <reaction evidence="1">
        <text>octanoyl-[ACP] + L-lysyl-[protein] = N(6)-octanoyl-L-lysyl-[protein] + holo-[ACP] + H(+)</text>
        <dbReference type="Rhea" id="RHEA:17665"/>
        <dbReference type="Rhea" id="RHEA-COMP:9636"/>
        <dbReference type="Rhea" id="RHEA-COMP:9685"/>
        <dbReference type="Rhea" id="RHEA-COMP:9752"/>
        <dbReference type="Rhea" id="RHEA-COMP:9928"/>
        <dbReference type="ChEBI" id="CHEBI:15378"/>
        <dbReference type="ChEBI" id="CHEBI:29969"/>
        <dbReference type="ChEBI" id="CHEBI:64479"/>
        <dbReference type="ChEBI" id="CHEBI:78463"/>
        <dbReference type="ChEBI" id="CHEBI:78809"/>
        <dbReference type="EC" id="2.3.1.181"/>
    </reaction>
</comment>
<comment type="pathway">
    <text evidence="1">Protein modification; protein lipoylation via endogenous pathway; protein N(6)-(lipoyl)lysine from octanoyl-[acyl-carrier-protein]: step 1/2.</text>
</comment>
<comment type="subcellular location">
    <subcellularLocation>
        <location evidence="1">Cytoplasm</location>
    </subcellularLocation>
</comment>
<comment type="miscellaneous">
    <text evidence="1">In the reaction, the free carboxyl group of octanoic acid is attached via an amide linkage to the epsilon-amino group of a specific lysine residue of lipoyl domains of lipoate-dependent enzymes.</text>
</comment>
<comment type="similarity">
    <text evidence="1">Belongs to the LipB family.</text>
</comment>
<feature type="chain" id="PRO_0000062822" description="Octanoyltransferase">
    <location>
        <begin position="1"/>
        <end position="203"/>
    </location>
</feature>
<feature type="domain" description="BPL/LPL catalytic" evidence="2">
    <location>
        <begin position="32"/>
        <end position="203"/>
    </location>
</feature>
<feature type="active site" description="Acyl-thioester intermediate" evidence="1">
    <location>
        <position position="169"/>
    </location>
</feature>
<feature type="binding site" evidence="1">
    <location>
        <begin position="71"/>
        <end position="78"/>
    </location>
    <ligand>
        <name>substrate</name>
    </ligand>
</feature>
<feature type="binding site" evidence="1">
    <location>
        <begin position="138"/>
        <end position="140"/>
    </location>
    <ligand>
        <name>substrate</name>
    </ligand>
</feature>
<feature type="binding site" evidence="1">
    <location>
        <begin position="151"/>
        <end position="153"/>
    </location>
    <ligand>
        <name>substrate</name>
    </ligand>
</feature>
<feature type="site" description="Lowers pKa of active site Cys" evidence="1">
    <location>
        <position position="135"/>
    </location>
</feature>
<evidence type="ECO:0000255" key="1">
    <source>
        <dbReference type="HAMAP-Rule" id="MF_00013"/>
    </source>
</evidence>
<evidence type="ECO:0000255" key="2">
    <source>
        <dbReference type="PROSITE-ProRule" id="PRU01067"/>
    </source>
</evidence>
<dbReference type="EC" id="2.3.1.181" evidence="1"/>
<dbReference type="EMBL" id="AE016826">
    <property type="protein sequence ID" value="AAO26976.1"/>
    <property type="molecule type" value="Genomic_DNA"/>
</dbReference>
<dbReference type="RefSeq" id="WP_011091377.1">
    <property type="nucleotide sequence ID" value="NC_004545.1"/>
</dbReference>
<dbReference type="SMR" id="Q89AL8"/>
<dbReference type="STRING" id="224915.bbp_249"/>
<dbReference type="KEGG" id="bab:bbp_249"/>
<dbReference type="eggNOG" id="COG0321">
    <property type="taxonomic scope" value="Bacteria"/>
</dbReference>
<dbReference type="HOGENOM" id="CLU_035168_3_1_6"/>
<dbReference type="OrthoDB" id="9787061at2"/>
<dbReference type="UniPathway" id="UPA00538">
    <property type="reaction ID" value="UER00592"/>
</dbReference>
<dbReference type="Proteomes" id="UP000000601">
    <property type="component" value="Chromosome"/>
</dbReference>
<dbReference type="GO" id="GO:0005737">
    <property type="term" value="C:cytoplasm"/>
    <property type="evidence" value="ECO:0007669"/>
    <property type="project" value="UniProtKB-SubCell"/>
</dbReference>
<dbReference type="GO" id="GO:0033819">
    <property type="term" value="F:lipoyl(octanoyl) transferase activity"/>
    <property type="evidence" value="ECO:0007669"/>
    <property type="project" value="UniProtKB-EC"/>
</dbReference>
<dbReference type="GO" id="GO:0036211">
    <property type="term" value="P:protein modification process"/>
    <property type="evidence" value="ECO:0007669"/>
    <property type="project" value="InterPro"/>
</dbReference>
<dbReference type="CDD" id="cd16444">
    <property type="entry name" value="LipB"/>
    <property type="match status" value="1"/>
</dbReference>
<dbReference type="FunFam" id="3.30.930.10:FF:000020">
    <property type="entry name" value="Octanoyltransferase"/>
    <property type="match status" value="1"/>
</dbReference>
<dbReference type="Gene3D" id="3.30.930.10">
    <property type="entry name" value="Bira Bifunctional Protein, Domain 2"/>
    <property type="match status" value="1"/>
</dbReference>
<dbReference type="HAMAP" id="MF_00013">
    <property type="entry name" value="LipB"/>
    <property type="match status" value="1"/>
</dbReference>
<dbReference type="InterPro" id="IPR045864">
    <property type="entry name" value="aa-tRNA-synth_II/BPL/LPL"/>
</dbReference>
<dbReference type="InterPro" id="IPR004143">
    <property type="entry name" value="BPL_LPL_catalytic"/>
</dbReference>
<dbReference type="InterPro" id="IPR000544">
    <property type="entry name" value="Octanoyltransferase"/>
</dbReference>
<dbReference type="InterPro" id="IPR020605">
    <property type="entry name" value="Octanoyltransferase_CS"/>
</dbReference>
<dbReference type="NCBIfam" id="TIGR00214">
    <property type="entry name" value="lipB"/>
    <property type="match status" value="1"/>
</dbReference>
<dbReference type="NCBIfam" id="NF010922">
    <property type="entry name" value="PRK14342.1"/>
    <property type="match status" value="1"/>
</dbReference>
<dbReference type="PANTHER" id="PTHR10993:SF7">
    <property type="entry name" value="LIPOYLTRANSFERASE 2, MITOCHONDRIAL-RELATED"/>
    <property type="match status" value="1"/>
</dbReference>
<dbReference type="PANTHER" id="PTHR10993">
    <property type="entry name" value="OCTANOYLTRANSFERASE"/>
    <property type="match status" value="1"/>
</dbReference>
<dbReference type="Pfam" id="PF21948">
    <property type="entry name" value="LplA-B_cat"/>
    <property type="match status" value="1"/>
</dbReference>
<dbReference type="PIRSF" id="PIRSF016262">
    <property type="entry name" value="LPLase"/>
    <property type="match status" value="1"/>
</dbReference>
<dbReference type="SUPFAM" id="SSF55681">
    <property type="entry name" value="Class II aaRS and biotin synthetases"/>
    <property type="match status" value="1"/>
</dbReference>
<dbReference type="PROSITE" id="PS51733">
    <property type="entry name" value="BPL_LPL_CATALYTIC"/>
    <property type="match status" value="1"/>
</dbReference>
<dbReference type="PROSITE" id="PS01313">
    <property type="entry name" value="LIPB"/>
    <property type="match status" value="1"/>
</dbReference>
<name>LIPB_BUCBP</name>
<accession>Q89AL8</accession>
<protein>
    <recommendedName>
        <fullName evidence="1">Octanoyltransferase</fullName>
        <ecNumber evidence="1">2.3.1.181</ecNumber>
    </recommendedName>
    <alternativeName>
        <fullName evidence="1">Lipoate-protein ligase B</fullName>
    </alternativeName>
    <alternativeName>
        <fullName evidence="1">Lipoyl/octanoyl transferase</fullName>
    </alternativeName>
    <alternativeName>
        <fullName evidence="1">Octanoyl-[acyl-carrier-protein]-protein N-octanoyltransferase</fullName>
    </alternativeName>
</protein>
<organism>
    <name type="scientific">Buchnera aphidicola subsp. Baizongia pistaciae (strain Bp)</name>
    <dbReference type="NCBI Taxonomy" id="224915"/>
    <lineage>
        <taxon>Bacteria</taxon>
        <taxon>Pseudomonadati</taxon>
        <taxon>Pseudomonadota</taxon>
        <taxon>Gammaproteobacteria</taxon>
        <taxon>Enterobacterales</taxon>
        <taxon>Erwiniaceae</taxon>
        <taxon>Buchnera</taxon>
    </lineage>
</organism>
<proteinExistence type="inferred from homology"/>
<reference key="1">
    <citation type="journal article" date="2003" name="Proc. Natl. Acad. Sci. U.S.A.">
        <title>Reductive genome evolution in Buchnera aphidicola.</title>
        <authorList>
            <person name="van Ham R.C.H.J."/>
            <person name="Kamerbeek J."/>
            <person name="Palacios C."/>
            <person name="Rausell C."/>
            <person name="Abascal F."/>
            <person name="Bastolla U."/>
            <person name="Fernandez J.M."/>
            <person name="Jimenez L."/>
            <person name="Postigo M."/>
            <person name="Silva F.J."/>
            <person name="Tamames J."/>
            <person name="Viguera E."/>
            <person name="Latorre A."/>
            <person name="Valencia A."/>
            <person name="Moran F."/>
            <person name="Moya A."/>
        </authorList>
    </citation>
    <scope>NUCLEOTIDE SEQUENCE [LARGE SCALE GENOMIC DNA]</scope>
    <source>
        <strain>Bp</strain>
    </source>
</reference>